<feature type="chain" id="PRO_1000194225" description="Small ribosomal subunit protein bS20">
    <location>
        <begin position="1"/>
        <end position="85"/>
    </location>
</feature>
<protein>
    <recommendedName>
        <fullName evidence="1">Small ribosomal subunit protein bS20</fullName>
    </recommendedName>
    <alternativeName>
        <fullName evidence="2">30S ribosomal protein S20</fullName>
    </alternativeName>
</protein>
<accession>A1QZ26</accession>
<reference key="1">
    <citation type="submission" date="2004-12" db="EMBL/GenBank/DDBJ databases">
        <title>The genome sequence of Borrelia hermsii and Borrelia turicatae: comparative analysis of two agents of endemic N. America relapsing fever.</title>
        <authorList>
            <person name="Porcella S.F."/>
            <person name="Raffel S.J."/>
            <person name="Schrumpf M.E."/>
            <person name="Montgomery B."/>
            <person name="Smith T."/>
            <person name="Schwan T.G."/>
        </authorList>
    </citation>
    <scope>NUCLEOTIDE SEQUENCE [LARGE SCALE GENOMIC DNA]</scope>
    <source>
        <strain>91E135</strain>
    </source>
</reference>
<keyword id="KW-1185">Reference proteome</keyword>
<keyword id="KW-0687">Ribonucleoprotein</keyword>
<keyword id="KW-0689">Ribosomal protein</keyword>
<keyword id="KW-0694">RNA-binding</keyword>
<keyword id="KW-0699">rRNA-binding</keyword>
<gene>
    <name evidence="1" type="primary">rpsT</name>
    <name type="ordered locus">BT0233</name>
</gene>
<evidence type="ECO:0000255" key="1">
    <source>
        <dbReference type="HAMAP-Rule" id="MF_00500"/>
    </source>
</evidence>
<evidence type="ECO:0000305" key="2"/>
<sequence>MGNNPSALKRARQNLKRNLRNVSVKSELKTIEKRCMNLIREGKKEEALEFFKFVSKKLDTAARKRIIHRNKAARKKSNLSILLLR</sequence>
<dbReference type="EMBL" id="CP000049">
    <property type="protein sequence ID" value="AAX17568.1"/>
    <property type="molecule type" value="Genomic_DNA"/>
</dbReference>
<dbReference type="RefSeq" id="WP_011772187.1">
    <property type="nucleotide sequence ID" value="NZ_CP073176.1"/>
</dbReference>
<dbReference type="SMR" id="A1QZ26"/>
<dbReference type="KEGG" id="btu:BT0233"/>
<dbReference type="eggNOG" id="COG0268">
    <property type="taxonomic scope" value="Bacteria"/>
</dbReference>
<dbReference type="HOGENOM" id="CLU_160655_4_0_12"/>
<dbReference type="Proteomes" id="UP000001205">
    <property type="component" value="Chromosome"/>
</dbReference>
<dbReference type="GO" id="GO:0005829">
    <property type="term" value="C:cytosol"/>
    <property type="evidence" value="ECO:0007669"/>
    <property type="project" value="TreeGrafter"/>
</dbReference>
<dbReference type="GO" id="GO:0015935">
    <property type="term" value="C:small ribosomal subunit"/>
    <property type="evidence" value="ECO:0007669"/>
    <property type="project" value="TreeGrafter"/>
</dbReference>
<dbReference type="GO" id="GO:0070181">
    <property type="term" value="F:small ribosomal subunit rRNA binding"/>
    <property type="evidence" value="ECO:0007669"/>
    <property type="project" value="TreeGrafter"/>
</dbReference>
<dbReference type="GO" id="GO:0003735">
    <property type="term" value="F:structural constituent of ribosome"/>
    <property type="evidence" value="ECO:0007669"/>
    <property type="project" value="InterPro"/>
</dbReference>
<dbReference type="GO" id="GO:0006412">
    <property type="term" value="P:translation"/>
    <property type="evidence" value="ECO:0007669"/>
    <property type="project" value="UniProtKB-UniRule"/>
</dbReference>
<dbReference type="FunFam" id="1.20.58.110:FF:000001">
    <property type="entry name" value="30S ribosomal protein S20"/>
    <property type="match status" value="1"/>
</dbReference>
<dbReference type="Gene3D" id="1.20.58.110">
    <property type="entry name" value="Ribosomal protein S20"/>
    <property type="match status" value="1"/>
</dbReference>
<dbReference type="HAMAP" id="MF_00500">
    <property type="entry name" value="Ribosomal_bS20"/>
    <property type="match status" value="1"/>
</dbReference>
<dbReference type="InterPro" id="IPR002583">
    <property type="entry name" value="Ribosomal_bS20"/>
</dbReference>
<dbReference type="InterPro" id="IPR036510">
    <property type="entry name" value="Ribosomal_bS20_sf"/>
</dbReference>
<dbReference type="NCBIfam" id="TIGR00029">
    <property type="entry name" value="S20"/>
    <property type="match status" value="1"/>
</dbReference>
<dbReference type="PANTHER" id="PTHR33398">
    <property type="entry name" value="30S RIBOSOMAL PROTEIN S20"/>
    <property type="match status" value="1"/>
</dbReference>
<dbReference type="PANTHER" id="PTHR33398:SF1">
    <property type="entry name" value="SMALL RIBOSOMAL SUBUNIT PROTEIN BS20C"/>
    <property type="match status" value="1"/>
</dbReference>
<dbReference type="Pfam" id="PF01649">
    <property type="entry name" value="Ribosomal_S20p"/>
    <property type="match status" value="1"/>
</dbReference>
<dbReference type="SUPFAM" id="SSF46992">
    <property type="entry name" value="Ribosomal protein S20"/>
    <property type="match status" value="1"/>
</dbReference>
<proteinExistence type="inferred from homology"/>
<organism>
    <name type="scientific">Borrelia turicatae (strain 91E135)</name>
    <dbReference type="NCBI Taxonomy" id="314724"/>
    <lineage>
        <taxon>Bacteria</taxon>
        <taxon>Pseudomonadati</taxon>
        <taxon>Spirochaetota</taxon>
        <taxon>Spirochaetia</taxon>
        <taxon>Spirochaetales</taxon>
        <taxon>Borreliaceae</taxon>
        <taxon>Borrelia</taxon>
    </lineage>
</organism>
<comment type="function">
    <text evidence="1">Binds directly to 16S ribosomal RNA.</text>
</comment>
<comment type="similarity">
    <text evidence="1">Belongs to the bacterial ribosomal protein bS20 family.</text>
</comment>
<name>RS20_BORT9</name>